<proteinExistence type="inferred from homology"/>
<keyword id="KW-0963">Cytoplasm</keyword>
<keyword id="KW-0489">Methyltransferase</keyword>
<keyword id="KW-0949">S-adenosyl-L-methionine</keyword>
<keyword id="KW-0808">Transferase</keyword>
<keyword id="KW-0819">tRNA processing</keyword>
<dbReference type="EC" id="2.1.1.228"/>
<dbReference type="EMBL" id="AL596170">
    <property type="protein sequence ID" value="CAC97136.1"/>
    <property type="molecule type" value="Genomic_DNA"/>
</dbReference>
<dbReference type="PIR" id="AH1670">
    <property type="entry name" value="AH1670"/>
</dbReference>
<dbReference type="RefSeq" id="WP_003762885.1">
    <property type="nucleotide sequence ID" value="NC_003212.1"/>
</dbReference>
<dbReference type="SMR" id="Q92AL6"/>
<dbReference type="STRING" id="272626.gene:17566264"/>
<dbReference type="GeneID" id="93235244"/>
<dbReference type="KEGG" id="lin:trmD"/>
<dbReference type="eggNOG" id="COG0336">
    <property type="taxonomic scope" value="Bacteria"/>
</dbReference>
<dbReference type="HOGENOM" id="CLU_047363_0_1_9"/>
<dbReference type="OrthoDB" id="9807416at2"/>
<dbReference type="Proteomes" id="UP000002513">
    <property type="component" value="Chromosome"/>
</dbReference>
<dbReference type="GO" id="GO:0005829">
    <property type="term" value="C:cytosol"/>
    <property type="evidence" value="ECO:0007669"/>
    <property type="project" value="TreeGrafter"/>
</dbReference>
<dbReference type="GO" id="GO:0052906">
    <property type="term" value="F:tRNA (guanine(37)-N1)-methyltransferase activity"/>
    <property type="evidence" value="ECO:0007669"/>
    <property type="project" value="UniProtKB-UniRule"/>
</dbReference>
<dbReference type="GO" id="GO:0002939">
    <property type="term" value="P:tRNA N1-guanine methylation"/>
    <property type="evidence" value="ECO:0007669"/>
    <property type="project" value="TreeGrafter"/>
</dbReference>
<dbReference type="CDD" id="cd18080">
    <property type="entry name" value="TrmD-like"/>
    <property type="match status" value="1"/>
</dbReference>
<dbReference type="FunFam" id="1.10.1270.20:FF:000001">
    <property type="entry name" value="tRNA (guanine-N(1)-)-methyltransferase"/>
    <property type="match status" value="1"/>
</dbReference>
<dbReference type="FunFam" id="3.40.1280.10:FF:000001">
    <property type="entry name" value="tRNA (guanine-N(1)-)-methyltransferase"/>
    <property type="match status" value="1"/>
</dbReference>
<dbReference type="Gene3D" id="3.40.1280.10">
    <property type="match status" value="1"/>
</dbReference>
<dbReference type="Gene3D" id="1.10.1270.20">
    <property type="entry name" value="tRNA(m1g37)methyltransferase, domain 2"/>
    <property type="match status" value="1"/>
</dbReference>
<dbReference type="HAMAP" id="MF_00605">
    <property type="entry name" value="TrmD"/>
    <property type="match status" value="1"/>
</dbReference>
<dbReference type="InterPro" id="IPR029028">
    <property type="entry name" value="Alpha/beta_knot_MTases"/>
</dbReference>
<dbReference type="InterPro" id="IPR023148">
    <property type="entry name" value="tRNA_m1G_MeTrfase_C_sf"/>
</dbReference>
<dbReference type="InterPro" id="IPR002649">
    <property type="entry name" value="tRNA_m1G_MeTrfase_TrmD"/>
</dbReference>
<dbReference type="InterPro" id="IPR029026">
    <property type="entry name" value="tRNA_m1G_MTases_N"/>
</dbReference>
<dbReference type="InterPro" id="IPR016009">
    <property type="entry name" value="tRNA_MeTrfase_TRMD/TRM10"/>
</dbReference>
<dbReference type="NCBIfam" id="NF000648">
    <property type="entry name" value="PRK00026.1"/>
    <property type="match status" value="1"/>
</dbReference>
<dbReference type="NCBIfam" id="TIGR00088">
    <property type="entry name" value="trmD"/>
    <property type="match status" value="1"/>
</dbReference>
<dbReference type="PANTHER" id="PTHR46417">
    <property type="entry name" value="TRNA (GUANINE-N(1)-)-METHYLTRANSFERASE"/>
    <property type="match status" value="1"/>
</dbReference>
<dbReference type="PANTHER" id="PTHR46417:SF1">
    <property type="entry name" value="TRNA (GUANINE-N(1)-)-METHYLTRANSFERASE"/>
    <property type="match status" value="1"/>
</dbReference>
<dbReference type="Pfam" id="PF01746">
    <property type="entry name" value="tRNA_m1G_MT"/>
    <property type="match status" value="1"/>
</dbReference>
<dbReference type="PIRSF" id="PIRSF000386">
    <property type="entry name" value="tRNA_mtase"/>
    <property type="match status" value="1"/>
</dbReference>
<dbReference type="SUPFAM" id="SSF75217">
    <property type="entry name" value="alpha/beta knot"/>
    <property type="match status" value="1"/>
</dbReference>
<reference key="1">
    <citation type="journal article" date="2001" name="Science">
        <title>Comparative genomics of Listeria species.</title>
        <authorList>
            <person name="Glaser P."/>
            <person name="Frangeul L."/>
            <person name="Buchrieser C."/>
            <person name="Rusniok C."/>
            <person name="Amend A."/>
            <person name="Baquero F."/>
            <person name="Berche P."/>
            <person name="Bloecker H."/>
            <person name="Brandt P."/>
            <person name="Chakraborty T."/>
            <person name="Charbit A."/>
            <person name="Chetouani F."/>
            <person name="Couve E."/>
            <person name="de Daruvar A."/>
            <person name="Dehoux P."/>
            <person name="Domann E."/>
            <person name="Dominguez-Bernal G."/>
            <person name="Duchaud E."/>
            <person name="Durant L."/>
            <person name="Dussurget O."/>
            <person name="Entian K.-D."/>
            <person name="Fsihi H."/>
            <person name="Garcia-del Portillo F."/>
            <person name="Garrido P."/>
            <person name="Gautier L."/>
            <person name="Goebel W."/>
            <person name="Gomez-Lopez N."/>
            <person name="Hain T."/>
            <person name="Hauf J."/>
            <person name="Jackson D."/>
            <person name="Jones L.-M."/>
            <person name="Kaerst U."/>
            <person name="Kreft J."/>
            <person name="Kuhn M."/>
            <person name="Kunst F."/>
            <person name="Kurapkat G."/>
            <person name="Madueno E."/>
            <person name="Maitournam A."/>
            <person name="Mata Vicente J."/>
            <person name="Ng E."/>
            <person name="Nedjari H."/>
            <person name="Nordsiek G."/>
            <person name="Novella S."/>
            <person name="de Pablos B."/>
            <person name="Perez-Diaz J.-C."/>
            <person name="Purcell R."/>
            <person name="Remmel B."/>
            <person name="Rose M."/>
            <person name="Schlueter T."/>
            <person name="Simoes N."/>
            <person name="Tierrez A."/>
            <person name="Vazquez-Boland J.-A."/>
            <person name="Voss H."/>
            <person name="Wehland J."/>
            <person name="Cossart P."/>
        </authorList>
    </citation>
    <scope>NUCLEOTIDE SEQUENCE [LARGE SCALE GENOMIC DNA]</scope>
    <source>
        <strain>ATCC BAA-680 / CLIP 11262</strain>
    </source>
</reference>
<sequence length="245" mass="27865">MKIDILSIFPDMFSGVTGSSIIKKAIENERVAVEVTDFREYAEGKHQVVDDYPYGGGAGMLLKAQPIFDAVQAVKDKQPETKPRVILMDPAGKRFDQKMAEEFAEEEHLVFICGHYEGYDERIREHLVTDEVSIGDYILTGGEIGAMIVMDSVIRLLPGVLGNKDSAVTDSFSTGLLEHPHYTRPADFRGMKVPDILLSGNHAWIEEWRDKESLKRTYERRPDLLKNYPLTDKQKTWLKEWSDSK</sequence>
<gene>
    <name type="primary">trmD</name>
    <name type="ordered locus">lin1906</name>
</gene>
<organism>
    <name type="scientific">Listeria innocua serovar 6a (strain ATCC BAA-680 / CLIP 11262)</name>
    <dbReference type="NCBI Taxonomy" id="272626"/>
    <lineage>
        <taxon>Bacteria</taxon>
        <taxon>Bacillati</taxon>
        <taxon>Bacillota</taxon>
        <taxon>Bacilli</taxon>
        <taxon>Bacillales</taxon>
        <taxon>Listeriaceae</taxon>
        <taxon>Listeria</taxon>
    </lineage>
</organism>
<protein>
    <recommendedName>
        <fullName>tRNA (guanine-N(1)-)-methyltransferase</fullName>
        <ecNumber>2.1.1.228</ecNumber>
    </recommendedName>
    <alternativeName>
        <fullName>M1G-methyltransferase</fullName>
    </alternativeName>
    <alternativeName>
        <fullName>tRNA [GM37] methyltransferase</fullName>
    </alternativeName>
</protein>
<accession>Q92AL6</accession>
<comment type="function">
    <text evidence="1">Specifically methylates guanosine-37 in various tRNAs.</text>
</comment>
<comment type="catalytic activity">
    <reaction>
        <text>guanosine(37) in tRNA + S-adenosyl-L-methionine = N(1)-methylguanosine(37) in tRNA + S-adenosyl-L-homocysteine + H(+)</text>
        <dbReference type="Rhea" id="RHEA:36899"/>
        <dbReference type="Rhea" id="RHEA-COMP:10145"/>
        <dbReference type="Rhea" id="RHEA-COMP:10147"/>
        <dbReference type="ChEBI" id="CHEBI:15378"/>
        <dbReference type="ChEBI" id="CHEBI:57856"/>
        <dbReference type="ChEBI" id="CHEBI:59789"/>
        <dbReference type="ChEBI" id="CHEBI:73542"/>
        <dbReference type="ChEBI" id="CHEBI:74269"/>
        <dbReference type="EC" id="2.1.1.228"/>
    </reaction>
</comment>
<comment type="subunit">
    <text evidence="1">Homodimer.</text>
</comment>
<comment type="subcellular location">
    <subcellularLocation>
        <location evidence="2">Cytoplasm</location>
    </subcellularLocation>
</comment>
<comment type="similarity">
    <text evidence="2">Belongs to the RNA methyltransferase TrmD family.</text>
</comment>
<evidence type="ECO:0000250" key="1"/>
<evidence type="ECO:0000305" key="2"/>
<name>TRMD_LISIN</name>
<feature type="chain" id="PRO_0000060401" description="tRNA (guanine-N(1)-)-methyltransferase">
    <location>
        <begin position="1"/>
        <end position="245"/>
    </location>
</feature>
<feature type="binding site" evidence="1">
    <location>
        <position position="114"/>
    </location>
    <ligand>
        <name>S-adenosyl-L-methionine</name>
        <dbReference type="ChEBI" id="CHEBI:59789"/>
    </ligand>
</feature>
<feature type="binding site" evidence="1">
    <location>
        <begin position="134"/>
        <end position="139"/>
    </location>
    <ligand>
        <name>S-adenosyl-L-methionine</name>
        <dbReference type="ChEBI" id="CHEBI:59789"/>
    </ligand>
</feature>